<keyword id="KW-0028">Amino-acid biosynthesis</keyword>
<keyword id="KW-0057">Aromatic amino acid biosynthesis</keyword>
<keyword id="KW-0456">Lyase</keyword>
<keyword id="KW-0822">Tryptophan biosynthesis</keyword>
<gene>
    <name evidence="1" type="primary">trpA</name>
    <name type="ordered locus">VP1961</name>
</gene>
<organism>
    <name type="scientific">Vibrio parahaemolyticus serotype O3:K6 (strain RIMD 2210633)</name>
    <dbReference type="NCBI Taxonomy" id="223926"/>
    <lineage>
        <taxon>Bacteria</taxon>
        <taxon>Pseudomonadati</taxon>
        <taxon>Pseudomonadota</taxon>
        <taxon>Gammaproteobacteria</taxon>
        <taxon>Vibrionales</taxon>
        <taxon>Vibrionaceae</taxon>
        <taxon>Vibrio</taxon>
    </lineage>
</organism>
<sequence length="268" mass="28601">MSRYEKMFARLNEKNQGAFVPFVTVCDPNAEQSYKIMETLVESGADALELGIPFSDPLADGPTIQGANIRALDSGATPDICFEQIGKIRAKYPDLPIGLLMYANLVYSRGIESFYERCAKAGIDSVLIADVPTNESAEFVAAAEKFGIHPIFIAPPTASDETLKQVSELGGGYTYLLSRAGVTGAETKANMPVDHMLEKLNQFNAPPALLGFGISEPAQVKQAIEAGAAGAISGSAVVKIIEAHVEQPQIMLDKLGEFVSAMKAATQK</sequence>
<dbReference type="EC" id="4.2.1.20" evidence="1"/>
<dbReference type="EMBL" id="X17149">
    <property type="protein sequence ID" value="CAA35036.1"/>
    <property type="molecule type" value="Genomic_DNA"/>
</dbReference>
<dbReference type="EMBL" id="BA000031">
    <property type="protein sequence ID" value="BAC60224.1"/>
    <property type="molecule type" value="Genomic_DNA"/>
</dbReference>
<dbReference type="RefSeq" id="NP_798340.1">
    <property type="nucleotide sequence ID" value="NC_004603.1"/>
</dbReference>
<dbReference type="RefSeq" id="WP_005481690.1">
    <property type="nucleotide sequence ID" value="NC_004603.1"/>
</dbReference>
<dbReference type="SMR" id="P22095"/>
<dbReference type="GeneID" id="1189472"/>
<dbReference type="KEGG" id="vpa:VP1961"/>
<dbReference type="PATRIC" id="fig|223926.6.peg.1876"/>
<dbReference type="eggNOG" id="COG0159">
    <property type="taxonomic scope" value="Bacteria"/>
</dbReference>
<dbReference type="HOGENOM" id="CLU_016734_0_4_6"/>
<dbReference type="UniPathway" id="UPA00035">
    <property type="reaction ID" value="UER00044"/>
</dbReference>
<dbReference type="Proteomes" id="UP000002493">
    <property type="component" value="Chromosome 1"/>
</dbReference>
<dbReference type="GO" id="GO:0005829">
    <property type="term" value="C:cytosol"/>
    <property type="evidence" value="ECO:0007669"/>
    <property type="project" value="TreeGrafter"/>
</dbReference>
<dbReference type="GO" id="GO:0004834">
    <property type="term" value="F:tryptophan synthase activity"/>
    <property type="evidence" value="ECO:0007669"/>
    <property type="project" value="UniProtKB-UniRule"/>
</dbReference>
<dbReference type="CDD" id="cd04724">
    <property type="entry name" value="Tryptophan_synthase_alpha"/>
    <property type="match status" value="1"/>
</dbReference>
<dbReference type="FunFam" id="3.20.20.70:FF:000037">
    <property type="entry name" value="Tryptophan synthase alpha chain"/>
    <property type="match status" value="1"/>
</dbReference>
<dbReference type="Gene3D" id="3.20.20.70">
    <property type="entry name" value="Aldolase class I"/>
    <property type="match status" value="1"/>
</dbReference>
<dbReference type="HAMAP" id="MF_00131">
    <property type="entry name" value="Trp_synth_alpha"/>
    <property type="match status" value="1"/>
</dbReference>
<dbReference type="InterPro" id="IPR013785">
    <property type="entry name" value="Aldolase_TIM"/>
</dbReference>
<dbReference type="InterPro" id="IPR011060">
    <property type="entry name" value="RibuloseP-bd_barrel"/>
</dbReference>
<dbReference type="InterPro" id="IPR018204">
    <property type="entry name" value="Trp_synthase_alpha_AS"/>
</dbReference>
<dbReference type="InterPro" id="IPR002028">
    <property type="entry name" value="Trp_synthase_suA"/>
</dbReference>
<dbReference type="NCBIfam" id="TIGR00262">
    <property type="entry name" value="trpA"/>
    <property type="match status" value="1"/>
</dbReference>
<dbReference type="PANTHER" id="PTHR43406:SF1">
    <property type="entry name" value="TRYPTOPHAN SYNTHASE ALPHA CHAIN, CHLOROPLASTIC"/>
    <property type="match status" value="1"/>
</dbReference>
<dbReference type="PANTHER" id="PTHR43406">
    <property type="entry name" value="TRYPTOPHAN SYNTHASE, ALPHA CHAIN"/>
    <property type="match status" value="1"/>
</dbReference>
<dbReference type="Pfam" id="PF00290">
    <property type="entry name" value="Trp_syntA"/>
    <property type="match status" value="1"/>
</dbReference>
<dbReference type="SUPFAM" id="SSF51366">
    <property type="entry name" value="Ribulose-phoshate binding barrel"/>
    <property type="match status" value="1"/>
</dbReference>
<dbReference type="PROSITE" id="PS00167">
    <property type="entry name" value="TRP_SYNTHASE_ALPHA"/>
    <property type="match status" value="1"/>
</dbReference>
<name>TRPA_VIBPA</name>
<accession>P22095</accession>
<evidence type="ECO:0000255" key="1">
    <source>
        <dbReference type="HAMAP-Rule" id="MF_00131"/>
    </source>
</evidence>
<evidence type="ECO:0000305" key="2"/>
<protein>
    <recommendedName>
        <fullName evidence="1">Tryptophan synthase alpha chain</fullName>
        <ecNumber evidence="1">4.2.1.20</ecNumber>
    </recommendedName>
</protein>
<reference key="1">
    <citation type="journal article" date="1991" name="DNA Seq.">
        <title>Sequence and features of the tryptophan operon of Vibrio parahemolyticus.</title>
        <authorList>
            <person name="Crawford I.P."/>
            <person name="Han C.Y."/>
            <person name="Silverman M."/>
        </authorList>
    </citation>
    <scope>NUCLEOTIDE SEQUENCE [GENOMIC DNA]</scope>
    <source>
        <strain>BB22</strain>
    </source>
</reference>
<reference key="2">
    <citation type="journal article" date="2003" name="Lancet">
        <title>Genome sequence of Vibrio parahaemolyticus: a pathogenic mechanism distinct from that of V. cholerae.</title>
        <authorList>
            <person name="Makino K."/>
            <person name="Oshima K."/>
            <person name="Kurokawa K."/>
            <person name="Yokoyama K."/>
            <person name="Uda T."/>
            <person name="Tagomori K."/>
            <person name="Iijima Y."/>
            <person name="Najima M."/>
            <person name="Nakano M."/>
            <person name="Yamashita A."/>
            <person name="Kubota Y."/>
            <person name="Kimura S."/>
            <person name="Yasunaga T."/>
            <person name="Honda T."/>
            <person name="Shinagawa H."/>
            <person name="Hattori M."/>
            <person name="Iida T."/>
        </authorList>
    </citation>
    <scope>NUCLEOTIDE SEQUENCE [LARGE SCALE GENOMIC DNA]</scope>
    <source>
        <strain>RIMD 2210633</strain>
    </source>
</reference>
<comment type="function">
    <text evidence="1">The alpha subunit is responsible for the aldol cleavage of indoleglycerol phosphate to indole and glyceraldehyde 3-phosphate.</text>
</comment>
<comment type="catalytic activity">
    <reaction evidence="1">
        <text>(1S,2R)-1-C-(indol-3-yl)glycerol 3-phosphate + L-serine = D-glyceraldehyde 3-phosphate + L-tryptophan + H2O</text>
        <dbReference type="Rhea" id="RHEA:10532"/>
        <dbReference type="ChEBI" id="CHEBI:15377"/>
        <dbReference type="ChEBI" id="CHEBI:33384"/>
        <dbReference type="ChEBI" id="CHEBI:57912"/>
        <dbReference type="ChEBI" id="CHEBI:58866"/>
        <dbReference type="ChEBI" id="CHEBI:59776"/>
        <dbReference type="EC" id="4.2.1.20"/>
    </reaction>
</comment>
<comment type="pathway">
    <text evidence="1">Amino-acid biosynthesis; L-tryptophan biosynthesis; L-tryptophan from chorismate: step 5/5.</text>
</comment>
<comment type="subunit">
    <text evidence="1">Tetramer of two alpha and two beta chains.</text>
</comment>
<comment type="similarity">
    <text evidence="1">Belongs to the TrpA family.</text>
</comment>
<proteinExistence type="inferred from homology"/>
<feature type="chain" id="PRO_0000098871" description="Tryptophan synthase alpha chain">
    <location>
        <begin position="1"/>
        <end position="268"/>
    </location>
</feature>
<feature type="active site" description="Proton acceptor" evidence="1">
    <location>
        <position position="49"/>
    </location>
</feature>
<feature type="active site" description="Proton acceptor" evidence="1">
    <location>
        <position position="60"/>
    </location>
</feature>
<feature type="sequence conflict" description="In Ref. 1; CAA35036." evidence="2" ref="1">
    <original>N</original>
    <variation>D</variation>
    <location>
        <position position="204"/>
    </location>
</feature>
<feature type="sequence conflict" description="In Ref. 1; CAA35036." evidence="2" ref="1">
    <original>F</original>
    <variation>L</variation>
    <location>
        <position position="258"/>
    </location>
</feature>